<evidence type="ECO:0000255" key="1">
    <source>
        <dbReference type="HAMAP-Rule" id="MF_01181"/>
    </source>
</evidence>
<keyword id="KW-0963">Cytoplasm</keyword>
<keyword id="KW-0804">Transcription</keyword>
<keyword id="KW-0805">Transcription regulation</keyword>
<sequence length="169" mass="19212">MLNRLESLTQRVGGSNELIDQWLHARKELLVSYCTVIGIKPQKEKHTPLNAKTLENFCHNLVDYLSSGHFHIYDRIIKEVEGASSPKMALTAKIHPALKNNTQTIMAFHDRYTNIEIDDDSCTEYQQALSDIGEALDARFKLEDQLIQWAAESWQAAQLADADKKSQVN</sequence>
<accession>A7FNH5</accession>
<comment type="function">
    <text evidence="1">Binds RpoD and negatively regulates RpoD-mediated transcription activation by preventing the interaction between the primary sigma factor RpoD with the catalytic core of the RNA polymerase and with promoter DNA. May be involved in replacement of the RNA polymerase sigma subunit from RpoD to RpoS during the transition from exponential growth to the stationary phase.</text>
</comment>
<comment type="subunit">
    <text evidence="1">Interacts with RpoD.</text>
</comment>
<comment type="subcellular location">
    <subcellularLocation>
        <location evidence="1">Cytoplasm</location>
    </subcellularLocation>
</comment>
<comment type="similarity">
    <text evidence="1">Belongs to the Rsd/AlgQ family.</text>
</comment>
<organism>
    <name type="scientific">Yersinia pseudotuberculosis serotype O:1b (strain IP 31758)</name>
    <dbReference type="NCBI Taxonomy" id="349747"/>
    <lineage>
        <taxon>Bacteria</taxon>
        <taxon>Pseudomonadati</taxon>
        <taxon>Pseudomonadota</taxon>
        <taxon>Gammaproteobacteria</taxon>
        <taxon>Enterobacterales</taxon>
        <taxon>Yersiniaceae</taxon>
        <taxon>Yersinia</taxon>
    </lineage>
</organism>
<protein>
    <recommendedName>
        <fullName evidence="1">Regulator of sigma D</fullName>
    </recommendedName>
</protein>
<proteinExistence type="inferred from homology"/>
<dbReference type="EMBL" id="CP000720">
    <property type="protein sequence ID" value="ABS47060.1"/>
    <property type="molecule type" value="Genomic_DNA"/>
</dbReference>
<dbReference type="RefSeq" id="WP_011191553.1">
    <property type="nucleotide sequence ID" value="NC_009708.1"/>
</dbReference>
<dbReference type="SMR" id="A7FNH5"/>
<dbReference type="GeneID" id="49787717"/>
<dbReference type="KEGG" id="ypi:YpsIP31758_3852"/>
<dbReference type="HOGENOM" id="CLU_142729_0_0_6"/>
<dbReference type="Proteomes" id="UP000002412">
    <property type="component" value="Chromosome"/>
</dbReference>
<dbReference type="GO" id="GO:0005737">
    <property type="term" value="C:cytoplasm"/>
    <property type="evidence" value="ECO:0007669"/>
    <property type="project" value="UniProtKB-SubCell"/>
</dbReference>
<dbReference type="GO" id="GO:0006355">
    <property type="term" value="P:regulation of DNA-templated transcription"/>
    <property type="evidence" value="ECO:0007669"/>
    <property type="project" value="InterPro"/>
</dbReference>
<dbReference type="Gene3D" id="1.20.120.1370">
    <property type="entry name" value="Regulator of RNA polymerase sigma(70) subunit, domain 4"/>
    <property type="match status" value="1"/>
</dbReference>
<dbReference type="HAMAP" id="MF_01181">
    <property type="entry name" value="Rsd"/>
    <property type="match status" value="1"/>
</dbReference>
<dbReference type="InterPro" id="IPR038309">
    <property type="entry name" value="Rsd/AlgQ_sf"/>
</dbReference>
<dbReference type="InterPro" id="IPR023785">
    <property type="entry name" value="Sigma70_reg_Rsd"/>
</dbReference>
<dbReference type="InterPro" id="IPR007448">
    <property type="entry name" value="Sigma70_reg_Rsd_AlgQ"/>
</dbReference>
<dbReference type="NCBIfam" id="NF008723">
    <property type="entry name" value="PRK11718.1"/>
    <property type="match status" value="1"/>
</dbReference>
<dbReference type="Pfam" id="PF04353">
    <property type="entry name" value="Rsd_AlgQ"/>
    <property type="match status" value="1"/>
</dbReference>
<dbReference type="PIRSF" id="PIRSF016548">
    <property type="entry name" value="Rsd_AlgQ"/>
    <property type="match status" value="1"/>
</dbReference>
<reference key="1">
    <citation type="journal article" date="2007" name="PLoS Genet.">
        <title>The complete genome sequence of Yersinia pseudotuberculosis IP31758, the causative agent of Far East scarlet-like fever.</title>
        <authorList>
            <person name="Eppinger M."/>
            <person name="Rosovitz M.J."/>
            <person name="Fricke W.F."/>
            <person name="Rasko D.A."/>
            <person name="Kokorina G."/>
            <person name="Fayolle C."/>
            <person name="Lindler L.E."/>
            <person name="Carniel E."/>
            <person name="Ravel J."/>
        </authorList>
    </citation>
    <scope>NUCLEOTIDE SEQUENCE [LARGE SCALE GENOMIC DNA]</scope>
    <source>
        <strain>IP 31758</strain>
    </source>
</reference>
<gene>
    <name evidence="1" type="primary">rsd</name>
    <name type="ordered locus">YpsIP31758_3852</name>
</gene>
<name>RSD_YERP3</name>
<feature type="chain" id="PRO_1000065799" description="Regulator of sigma D">
    <location>
        <begin position="1"/>
        <end position="169"/>
    </location>
</feature>